<feature type="chain" id="PRO_0000161313" description="Fumarate hydratase class II">
    <location>
        <begin position="1"/>
        <end position="461"/>
    </location>
</feature>
<feature type="active site" description="Proton donor/acceptor" evidence="1">
    <location>
        <position position="186"/>
    </location>
</feature>
<feature type="active site" evidence="1">
    <location>
        <position position="316"/>
    </location>
</feature>
<feature type="binding site" evidence="1">
    <location>
        <begin position="97"/>
        <end position="99"/>
    </location>
    <ligand>
        <name>substrate</name>
    </ligand>
</feature>
<feature type="binding site" description="in site B" evidence="1">
    <location>
        <begin position="127"/>
        <end position="130"/>
    </location>
    <ligand>
        <name>substrate</name>
    </ligand>
</feature>
<feature type="binding site" evidence="1">
    <location>
        <begin position="137"/>
        <end position="139"/>
    </location>
    <ligand>
        <name>substrate</name>
    </ligand>
</feature>
<feature type="binding site" evidence="1">
    <location>
        <position position="185"/>
    </location>
    <ligand>
        <name>substrate</name>
    </ligand>
</feature>
<feature type="binding site" evidence="1">
    <location>
        <position position="317"/>
    </location>
    <ligand>
        <name>substrate</name>
    </ligand>
</feature>
<feature type="binding site" evidence="1">
    <location>
        <begin position="322"/>
        <end position="324"/>
    </location>
    <ligand>
        <name>substrate</name>
    </ligand>
</feature>
<feature type="site" description="Important for catalytic activity" evidence="1">
    <location>
        <position position="329"/>
    </location>
</feature>
<proteinExistence type="evidence at protein level"/>
<evidence type="ECO:0000255" key="1">
    <source>
        <dbReference type="HAMAP-Rule" id="MF_00743"/>
    </source>
</evidence>
<organism>
    <name type="scientific">Staphylococcus aureus (strain N315)</name>
    <dbReference type="NCBI Taxonomy" id="158879"/>
    <lineage>
        <taxon>Bacteria</taxon>
        <taxon>Bacillati</taxon>
        <taxon>Bacillota</taxon>
        <taxon>Bacilli</taxon>
        <taxon>Bacillales</taxon>
        <taxon>Staphylococcaceae</taxon>
        <taxon>Staphylococcus</taxon>
    </lineage>
</organism>
<dbReference type="EC" id="4.2.1.2" evidence="1"/>
<dbReference type="EMBL" id="BA000018">
    <property type="protein sequence ID" value="BAB42937.1"/>
    <property type="molecule type" value="Genomic_DNA"/>
</dbReference>
<dbReference type="PIR" id="B89972">
    <property type="entry name" value="B89972"/>
</dbReference>
<dbReference type="RefSeq" id="WP_000116228.1">
    <property type="nucleotide sequence ID" value="NC_002745.2"/>
</dbReference>
<dbReference type="SMR" id="P64173"/>
<dbReference type="EnsemblBacteria" id="BAB42937">
    <property type="protein sequence ID" value="BAB42937"/>
    <property type="gene ID" value="BAB42937"/>
</dbReference>
<dbReference type="KEGG" id="sau:SA1669"/>
<dbReference type="HOGENOM" id="CLU_021594_4_1_9"/>
<dbReference type="UniPathway" id="UPA00223">
    <property type="reaction ID" value="UER01007"/>
</dbReference>
<dbReference type="GO" id="GO:0005737">
    <property type="term" value="C:cytoplasm"/>
    <property type="evidence" value="ECO:0007669"/>
    <property type="project" value="UniProtKB-SubCell"/>
</dbReference>
<dbReference type="GO" id="GO:0004333">
    <property type="term" value="F:fumarate hydratase activity"/>
    <property type="evidence" value="ECO:0007669"/>
    <property type="project" value="UniProtKB-UniRule"/>
</dbReference>
<dbReference type="GO" id="GO:0006106">
    <property type="term" value="P:fumarate metabolic process"/>
    <property type="evidence" value="ECO:0007669"/>
    <property type="project" value="InterPro"/>
</dbReference>
<dbReference type="GO" id="GO:0006108">
    <property type="term" value="P:malate metabolic process"/>
    <property type="evidence" value="ECO:0007669"/>
    <property type="project" value="TreeGrafter"/>
</dbReference>
<dbReference type="GO" id="GO:0006099">
    <property type="term" value="P:tricarboxylic acid cycle"/>
    <property type="evidence" value="ECO:0007669"/>
    <property type="project" value="UniProtKB-UniRule"/>
</dbReference>
<dbReference type="CDD" id="cd01362">
    <property type="entry name" value="Fumarase_classII"/>
    <property type="match status" value="1"/>
</dbReference>
<dbReference type="FunFam" id="1.10.40.30:FF:000002">
    <property type="entry name" value="Fumarate hydratase class II"/>
    <property type="match status" value="1"/>
</dbReference>
<dbReference type="FunFam" id="1.10.275.10:FF:000001">
    <property type="entry name" value="Fumarate hydratase, mitochondrial"/>
    <property type="match status" value="1"/>
</dbReference>
<dbReference type="FunFam" id="1.20.200.10:FF:000001">
    <property type="entry name" value="Fumarate hydratase, mitochondrial"/>
    <property type="match status" value="1"/>
</dbReference>
<dbReference type="Gene3D" id="1.10.40.30">
    <property type="entry name" value="Fumarase/aspartase (C-terminal domain)"/>
    <property type="match status" value="1"/>
</dbReference>
<dbReference type="Gene3D" id="1.20.200.10">
    <property type="entry name" value="Fumarase/aspartase (Central domain)"/>
    <property type="match status" value="1"/>
</dbReference>
<dbReference type="Gene3D" id="1.10.275.10">
    <property type="entry name" value="Fumarase/aspartase (N-terminal domain)"/>
    <property type="match status" value="1"/>
</dbReference>
<dbReference type="HAMAP" id="MF_00743">
    <property type="entry name" value="FumaraseC"/>
    <property type="match status" value="1"/>
</dbReference>
<dbReference type="InterPro" id="IPR005677">
    <property type="entry name" value="Fum_hydII"/>
</dbReference>
<dbReference type="InterPro" id="IPR024083">
    <property type="entry name" value="Fumarase/histidase_N"/>
</dbReference>
<dbReference type="InterPro" id="IPR018951">
    <property type="entry name" value="Fumarase_C_C"/>
</dbReference>
<dbReference type="InterPro" id="IPR020557">
    <property type="entry name" value="Fumarate_lyase_CS"/>
</dbReference>
<dbReference type="InterPro" id="IPR000362">
    <property type="entry name" value="Fumarate_lyase_fam"/>
</dbReference>
<dbReference type="InterPro" id="IPR022761">
    <property type="entry name" value="Fumarate_lyase_N"/>
</dbReference>
<dbReference type="InterPro" id="IPR008948">
    <property type="entry name" value="L-Aspartase-like"/>
</dbReference>
<dbReference type="NCBIfam" id="TIGR00979">
    <property type="entry name" value="fumC_II"/>
    <property type="match status" value="1"/>
</dbReference>
<dbReference type="NCBIfam" id="NF008909">
    <property type="entry name" value="PRK12273.1"/>
    <property type="match status" value="1"/>
</dbReference>
<dbReference type="PANTHER" id="PTHR11444">
    <property type="entry name" value="ASPARTATEAMMONIA/ARGININOSUCCINATE/ADENYLOSUCCINATE LYASE"/>
    <property type="match status" value="1"/>
</dbReference>
<dbReference type="PANTHER" id="PTHR11444:SF1">
    <property type="entry name" value="FUMARATE HYDRATASE, MITOCHONDRIAL"/>
    <property type="match status" value="1"/>
</dbReference>
<dbReference type="Pfam" id="PF10415">
    <property type="entry name" value="FumaraseC_C"/>
    <property type="match status" value="1"/>
</dbReference>
<dbReference type="Pfam" id="PF00206">
    <property type="entry name" value="Lyase_1"/>
    <property type="match status" value="1"/>
</dbReference>
<dbReference type="PRINTS" id="PR00145">
    <property type="entry name" value="ARGSUCLYASE"/>
</dbReference>
<dbReference type="PRINTS" id="PR00149">
    <property type="entry name" value="FUMRATELYASE"/>
</dbReference>
<dbReference type="SUPFAM" id="SSF48557">
    <property type="entry name" value="L-aspartase-like"/>
    <property type="match status" value="1"/>
</dbReference>
<dbReference type="PROSITE" id="PS00163">
    <property type="entry name" value="FUMARATE_LYASES"/>
    <property type="match status" value="1"/>
</dbReference>
<keyword id="KW-0963">Cytoplasm</keyword>
<keyword id="KW-0456">Lyase</keyword>
<keyword id="KW-0816">Tricarboxylic acid cycle</keyword>
<gene>
    <name evidence="1" type="primary">fumC</name>
    <name type="synonym">citG</name>
    <name type="ordered locus">SA1669</name>
</gene>
<protein>
    <recommendedName>
        <fullName evidence="1">Fumarate hydratase class II</fullName>
        <shortName evidence="1">Fumarase C</shortName>
        <ecNumber evidence="1">4.2.1.2</ecNumber>
    </recommendedName>
    <alternativeName>
        <fullName evidence="1">Aerobic fumarase</fullName>
    </alternativeName>
    <alternativeName>
        <fullName evidence="1">Iron-independent fumarase</fullName>
    </alternativeName>
</protein>
<name>FUMC_STAAN</name>
<reference key="1">
    <citation type="journal article" date="2001" name="Lancet">
        <title>Whole genome sequencing of meticillin-resistant Staphylococcus aureus.</title>
        <authorList>
            <person name="Kuroda M."/>
            <person name="Ohta T."/>
            <person name="Uchiyama I."/>
            <person name="Baba T."/>
            <person name="Yuzawa H."/>
            <person name="Kobayashi I."/>
            <person name="Cui L."/>
            <person name="Oguchi A."/>
            <person name="Aoki K."/>
            <person name="Nagai Y."/>
            <person name="Lian J.-Q."/>
            <person name="Ito T."/>
            <person name="Kanamori M."/>
            <person name="Matsumaru H."/>
            <person name="Maruyama A."/>
            <person name="Murakami H."/>
            <person name="Hosoyama A."/>
            <person name="Mizutani-Ui Y."/>
            <person name="Takahashi N.K."/>
            <person name="Sawano T."/>
            <person name="Inoue R."/>
            <person name="Kaito C."/>
            <person name="Sekimizu K."/>
            <person name="Hirakawa H."/>
            <person name="Kuhara S."/>
            <person name="Goto S."/>
            <person name="Yabuzaki J."/>
            <person name="Kanehisa M."/>
            <person name="Yamashita A."/>
            <person name="Oshima K."/>
            <person name="Furuya K."/>
            <person name="Yoshino C."/>
            <person name="Shiba T."/>
            <person name="Hattori M."/>
            <person name="Ogasawara N."/>
            <person name="Hayashi H."/>
            <person name="Hiramatsu K."/>
        </authorList>
    </citation>
    <scope>NUCLEOTIDE SEQUENCE [LARGE SCALE GENOMIC DNA]</scope>
    <source>
        <strain>N315</strain>
    </source>
</reference>
<reference key="2">
    <citation type="submission" date="2007-10" db="UniProtKB">
        <title>Shotgun proteomic analysis of total and membrane protein extracts of S. aureus strain N315.</title>
        <authorList>
            <person name="Vaezzadeh A.R."/>
            <person name="Deshusses J."/>
            <person name="Lescuyer P."/>
            <person name="Hochstrasser D.F."/>
        </authorList>
    </citation>
    <scope>IDENTIFICATION BY MASS SPECTROMETRY [LARGE SCALE ANALYSIS]</scope>
    <source>
        <strain>N315</strain>
    </source>
</reference>
<sequence>MSVRIEHDTFGEIEVPADKYWGAQTERSKRNFPVGKERMPIEVVYGFAQLKRAAALANFDLGKLSEAKKDAIVYACDQILSGELDEHFPLVVWQTGSGTQSNMNVNEVVSYVANMYLKDHQIDESIHPNDDVNESQSSNDTFPTAMHVALYQEVETKLEPALKLLRNTLKEKEDKFESIIKIGRTHLQDATPIKLGQEISGWRYMLDRCEIMLSESKKHILNLAIGGTAVGTGINAHPEFGDKVAHYISENTGYPFVSSENKFHALTAHDEVVQLHGTLKALAGDLMKIANDVRWLASGPRAGLAEISIPENEPGSSIMPGKVNPTQCEMLTMVAVQVMGNDTVVGFASSQGNFELNVYKPVIMHNTLQSIYLLADGMETFNNNCAVGIEPIEENIDNYLNQSLMLVTALNPHIGYEKAAQIAKKAHKEGLTLKESAIQTGYVTEEQFEAWIKPEDMVDPH</sequence>
<accession>P64173</accession>
<accession>Q99T27</accession>
<comment type="function">
    <text evidence="1">Involved in the TCA cycle. Catalyzes the stereospecific interconversion of fumarate to L-malate.</text>
</comment>
<comment type="catalytic activity">
    <reaction evidence="1">
        <text>(S)-malate = fumarate + H2O</text>
        <dbReference type="Rhea" id="RHEA:12460"/>
        <dbReference type="ChEBI" id="CHEBI:15377"/>
        <dbReference type="ChEBI" id="CHEBI:15589"/>
        <dbReference type="ChEBI" id="CHEBI:29806"/>
        <dbReference type="EC" id="4.2.1.2"/>
    </reaction>
</comment>
<comment type="pathway">
    <text evidence="1">Carbohydrate metabolism; tricarboxylic acid cycle; (S)-malate from fumarate: step 1/1.</text>
</comment>
<comment type="subunit">
    <text evidence="1">Homotetramer.</text>
</comment>
<comment type="subcellular location">
    <subcellularLocation>
        <location evidence="1">Cytoplasm</location>
    </subcellularLocation>
</comment>
<comment type="miscellaneous">
    <text evidence="1">There are 2 substrate-binding sites: the catalytic A site, and the non-catalytic B site that may play a role in the transfer of substrate or product between the active site and the solvent. Alternatively, the B site may bind allosteric effectors.</text>
</comment>
<comment type="similarity">
    <text evidence="1">Belongs to the class-II fumarase/aspartase family. Fumarase subfamily.</text>
</comment>